<dbReference type="EC" id="2.1.1.33" evidence="2"/>
<dbReference type="EMBL" id="AL646052">
    <property type="protein sequence ID" value="CAD14233.1"/>
    <property type="molecule type" value="Genomic_DNA"/>
</dbReference>
<dbReference type="RefSeq" id="WP_011000658.1">
    <property type="nucleotide sequence ID" value="NC_003295.1"/>
</dbReference>
<dbReference type="SMR" id="Q8Y1I7"/>
<dbReference type="STRING" id="267608.RSc0703"/>
<dbReference type="EnsemblBacteria" id="CAD14233">
    <property type="protein sequence ID" value="CAD14233"/>
    <property type="gene ID" value="RSc0703"/>
</dbReference>
<dbReference type="KEGG" id="rso:RSc0703"/>
<dbReference type="eggNOG" id="COG0220">
    <property type="taxonomic scope" value="Bacteria"/>
</dbReference>
<dbReference type="HOGENOM" id="CLU_050910_0_1_4"/>
<dbReference type="UniPathway" id="UPA00989"/>
<dbReference type="Proteomes" id="UP000001436">
    <property type="component" value="Chromosome"/>
</dbReference>
<dbReference type="GO" id="GO:0043527">
    <property type="term" value="C:tRNA methyltransferase complex"/>
    <property type="evidence" value="ECO:0007669"/>
    <property type="project" value="TreeGrafter"/>
</dbReference>
<dbReference type="GO" id="GO:0008176">
    <property type="term" value="F:tRNA (guanine(46)-N7)-methyltransferase activity"/>
    <property type="evidence" value="ECO:0007669"/>
    <property type="project" value="UniProtKB-UniRule"/>
</dbReference>
<dbReference type="CDD" id="cd02440">
    <property type="entry name" value="AdoMet_MTases"/>
    <property type="match status" value="1"/>
</dbReference>
<dbReference type="Gene3D" id="3.40.50.150">
    <property type="entry name" value="Vaccinia Virus protein VP39"/>
    <property type="match status" value="1"/>
</dbReference>
<dbReference type="HAMAP" id="MF_01057">
    <property type="entry name" value="tRNA_methyltr_TrmB"/>
    <property type="match status" value="1"/>
</dbReference>
<dbReference type="InterPro" id="IPR029063">
    <property type="entry name" value="SAM-dependent_MTases_sf"/>
</dbReference>
<dbReference type="InterPro" id="IPR003358">
    <property type="entry name" value="tRNA_(Gua-N-7)_MeTrfase_Trmb"/>
</dbReference>
<dbReference type="InterPro" id="IPR055361">
    <property type="entry name" value="tRNA_methyltr_TrmB_bact"/>
</dbReference>
<dbReference type="NCBIfam" id="TIGR00091">
    <property type="entry name" value="tRNA (guanosine(46)-N7)-methyltransferase TrmB"/>
    <property type="match status" value="1"/>
</dbReference>
<dbReference type="PANTHER" id="PTHR23417">
    <property type="entry name" value="3-DEOXY-D-MANNO-OCTULOSONIC-ACID TRANSFERASE/TRNA GUANINE-N 7 - -METHYLTRANSFERASE"/>
    <property type="match status" value="1"/>
</dbReference>
<dbReference type="PANTHER" id="PTHR23417:SF14">
    <property type="entry name" value="PENTACOTRIPEPTIDE-REPEAT REGION OF PRORP DOMAIN-CONTAINING PROTEIN"/>
    <property type="match status" value="1"/>
</dbReference>
<dbReference type="Pfam" id="PF02390">
    <property type="entry name" value="Methyltransf_4"/>
    <property type="match status" value="1"/>
</dbReference>
<dbReference type="SUPFAM" id="SSF53335">
    <property type="entry name" value="S-adenosyl-L-methionine-dependent methyltransferases"/>
    <property type="match status" value="1"/>
</dbReference>
<dbReference type="PROSITE" id="PS51625">
    <property type="entry name" value="SAM_MT_TRMB"/>
    <property type="match status" value="1"/>
</dbReference>
<name>TRMB_RALN1</name>
<accession>Q8Y1I7</accession>
<sequence>MQPNEQPGTGPADTTLEQQDTAAAEVGHPRRIRSFVRRAGRTSTGQQRAIDELGPRFLLPYAAAPLDWEAAFGRTGARRIFEIGFGMGETSAHIAQLRPDDDFLGVEVHEPGVGALLKLIGERGIGNVRIVSHDAVEVLAQMIPEGTLDGIHVFFPDPWHKKRHNKRRLIQGPFVARLAAHLRPGGYLHCATDWEEYAHQMLEVLSAEPLLENTADGFAPRPDYRPVTKFEKRGLRLGHGVWDVVFRKRAA</sequence>
<organism>
    <name type="scientific">Ralstonia nicotianae (strain ATCC BAA-1114 / GMI1000)</name>
    <name type="common">Ralstonia solanacearum</name>
    <dbReference type="NCBI Taxonomy" id="267608"/>
    <lineage>
        <taxon>Bacteria</taxon>
        <taxon>Pseudomonadati</taxon>
        <taxon>Pseudomonadota</taxon>
        <taxon>Betaproteobacteria</taxon>
        <taxon>Burkholderiales</taxon>
        <taxon>Burkholderiaceae</taxon>
        <taxon>Ralstonia</taxon>
        <taxon>Ralstonia solanacearum species complex</taxon>
    </lineage>
</organism>
<evidence type="ECO:0000250" key="1"/>
<evidence type="ECO:0000255" key="2">
    <source>
        <dbReference type="HAMAP-Rule" id="MF_01057"/>
    </source>
</evidence>
<evidence type="ECO:0000256" key="3">
    <source>
        <dbReference type="SAM" id="MobiDB-lite"/>
    </source>
</evidence>
<feature type="chain" id="PRO_0000171379" description="tRNA (guanine-N(7)-)-methyltransferase">
    <location>
        <begin position="1"/>
        <end position="251"/>
    </location>
</feature>
<feature type="region of interest" description="Disordered" evidence="3">
    <location>
        <begin position="1"/>
        <end position="43"/>
    </location>
</feature>
<feature type="region of interest" description="Interaction with RNA" evidence="2">
    <location>
        <begin position="163"/>
        <end position="168"/>
    </location>
</feature>
<feature type="compositionally biased region" description="Basic residues" evidence="3">
    <location>
        <begin position="29"/>
        <end position="40"/>
    </location>
</feature>
<feature type="active site" evidence="1">
    <location>
        <position position="157"/>
    </location>
</feature>
<feature type="binding site" evidence="2">
    <location>
        <position position="82"/>
    </location>
    <ligand>
        <name>S-adenosyl-L-methionine</name>
        <dbReference type="ChEBI" id="CHEBI:59789"/>
    </ligand>
</feature>
<feature type="binding site" evidence="2">
    <location>
        <position position="107"/>
    </location>
    <ligand>
        <name>S-adenosyl-L-methionine</name>
        <dbReference type="ChEBI" id="CHEBI:59789"/>
    </ligand>
</feature>
<feature type="binding site" evidence="2">
    <location>
        <position position="134"/>
    </location>
    <ligand>
        <name>S-adenosyl-L-methionine</name>
        <dbReference type="ChEBI" id="CHEBI:59789"/>
    </ligand>
</feature>
<feature type="binding site" evidence="2">
    <location>
        <position position="157"/>
    </location>
    <ligand>
        <name>S-adenosyl-L-methionine</name>
        <dbReference type="ChEBI" id="CHEBI:59789"/>
    </ligand>
</feature>
<feature type="binding site" evidence="2">
    <location>
        <position position="161"/>
    </location>
    <ligand>
        <name>substrate</name>
    </ligand>
</feature>
<feature type="binding site" evidence="2">
    <location>
        <position position="193"/>
    </location>
    <ligand>
        <name>substrate</name>
    </ligand>
</feature>
<feature type="binding site" evidence="2">
    <location>
        <begin position="228"/>
        <end position="231"/>
    </location>
    <ligand>
        <name>substrate</name>
    </ligand>
</feature>
<gene>
    <name evidence="2" type="primary">trmB</name>
    <name type="ordered locus">RSc0703</name>
    <name type="ORF">RS01608</name>
</gene>
<proteinExistence type="inferred from homology"/>
<reference key="1">
    <citation type="journal article" date="2002" name="Nature">
        <title>Genome sequence of the plant pathogen Ralstonia solanacearum.</title>
        <authorList>
            <person name="Salanoubat M."/>
            <person name="Genin S."/>
            <person name="Artiguenave F."/>
            <person name="Gouzy J."/>
            <person name="Mangenot S."/>
            <person name="Arlat M."/>
            <person name="Billault A."/>
            <person name="Brottier P."/>
            <person name="Camus J.-C."/>
            <person name="Cattolico L."/>
            <person name="Chandler M."/>
            <person name="Choisne N."/>
            <person name="Claudel-Renard C."/>
            <person name="Cunnac S."/>
            <person name="Demange N."/>
            <person name="Gaspin C."/>
            <person name="Lavie M."/>
            <person name="Moisan A."/>
            <person name="Robert C."/>
            <person name="Saurin W."/>
            <person name="Schiex T."/>
            <person name="Siguier P."/>
            <person name="Thebault P."/>
            <person name="Whalen M."/>
            <person name="Wincker P."/>
            <person name="Levy M."/>
            <person name="Weissenbach J."/>
            <person name="Boucher C.A."/>
        </authorList>
    </citation>
    <scope>NUCLEOTIDE SEQUENCE [LARGE SCALE GENOMIC DNA]</scope>
    <source>
        <strain>ATCC BAA-1114 / GMI1000</strain>
    </source>
</reference>
<protein>
    <recommendedName>
        <fullName evidence="2">tRNA (guanine-N(7)-)-methyltransferase</fullName>
        <ecNumber evidence="2">2.1.1.33</ecNumber>
    </recommendedName>
    <alternativeName>
        <fullName evidence="2">tRNA (guanine(46)-N(7))-methyltransferase</fullName>
    </alternativeName>
    <alternativeName>
        <fullName evidence="2">tRNA(m7G46)-methyltransferase</fullName>
    </alternativeName>
</protein>
<keyword id="KW-0489">Methyltransferase</keyword>
<keyword id="KW-1185">Reference proteome</keyword>
<keyword id="KW-0949">S-adenosyl-L-methionine</keyword>
<keyword id="KW-0808">Transferase</keyword>
<keyword id="KW-0819">tRNA processing</keyword>
<comment type="function">
    <text evidence="2">Catalyzes the formation of N(7)-methylguanine at position 46 (m7G46) in tRNA.</text>
</comment>
<comment type="catalytic activity">
    <reaction evidence="2">
        <text>guanosine(46) in tRNA + S-adenosyl-L-methionine = N(7)-methylguanosine(46) in tRNA + S-adenosyl-L-homocysteine</text>
        <dbReference type="Rhea" id="RHEA:42708"/>
        <dbReference type="Rhea" id="RHEA-COMP:10188"/>
        <dbReference type="Rhea" id="RHEA-COMP:10189"/>
        <dbReference type="ChEBI" id="CHEBI:57856"/>
        <dbReference type="ChEBI" id="CHEBI:59789"/>
        <dbReference type="ChEBI" id="CHEBI:74269"/>
        <dbReference type="ChEBI" id="CHEBI:74480"/>
        <dbReference type="EC" id="2.1.1.33"/>
    </reaction>
</comment>
<comment type="pathway">
    <text evidence="2">tRNA modification; N(7)-methylguanine-tRNA biosynthesis.</text>
</comment>
<comment type="similarity">
    <text evidence="2">Belongs to the class I-like SAM-binding methyltransferase superfamily. TrmB family.</text>
</comment>